<accession>Q0BQI0</accession>
<organism>
    <name type="scientific">Granulibacter bethesdensis (strain ATCC BAA-1260 / CGDNIH1)</name>
    <dbReference type="NCBI Taxonomy" id="391165"/>
    <lineage>
        <taxon>Bacteria</taxon>
        <taxon>Pseudomonadati</taxon>
        <taxon>Pseudomonadota</taxon>
        <taxon>Alphaproteobacteria</taxon>
        <taxon>Acetobacterales</taxon>
        <taxon>Acetobacteraceae</taxon>
        <taxon>Granulibacter</taxon>
    </lineage>
</organism>
<comment type="catalytic activity">
    <reaction evidence="1">
        <text>CMP + ATP = CDP + ADP</text>
        <dbReference type="Rhea" id="RHEA:11600"/>
        <dbReference type="ChEBI" id="CHEBI:30616"/>
        <dbReference type="ChEBI" id="CHEBI:58069"/>
        <dbReference type="ChEBI" id="CHEBI:60377"/>
        <dbReference type="ChEBI" id="CHEBI:456216"/>
        <dbReference type="EC" id="2.7.4.25"/>
    </reaction>
</comment>
<comment type="catalytic activity">
    <reaction evidence="1">
        <text>dCMP + ATP = dCDP + ADP</text>
        <dbReference type="Rhea" id="RHEA:25094"/>
        <dbReference type="ChEBI" id="CHEBI:30616"/>
        <dbReference type="ChEBI" id="CHEBI:57566"/>
        <dbReference type="ChEBI" id="CHEBI:58593"/>
        <dbReference type="ChEBI" id="CHEBI:456216"/>
        <dbReference type="EC" id="2.7.4.25"/>
    </reaction>
</comment>
<comment type="subcellular location">
    <subcellularLocation>
        <location evidence="1">Cytoplasm</location>
    </subcellularLocation>
</comment>
<comment type="similarity">
    <text evidence="1">Belongs to the cytidylate kinase family. Type 1 subfamily.</text>
</comment>
<feature type="chain" id="PRO_1000048223" description="Cytidylate kinase">
    <location>
        <begin position="1"/>
        <end position="209"/>
    </location>
</feature>
<feature type="binding site" evidence="1">
    <location>
        <begin position="9"/>
        <end position="17"/>
    </location>
    <ligand>
        <name>ATP</name>
        <dbReference type="ChEBI" id="CHEBI:30616"/>
    </ligand>
</feature>
<sequence length="209" mass="22525">MRLIIAVDGPAAAGKGTLARRLASAFGLPHLDTGLLYRAVGRLVLDAGGDPGSPADAAWAVSVLVPETVQRSDLRVPEVDRAASLVAADPAVRAALLDFQRDFAAREGAVLDGRDIGTVVCPDAPVKLFVTASAEARLQRRLLELRNRGVAVEEQALRAEMQARDERDAARDVAPLRPAEDAEVLDTTHLDADQAFQRAEQIVRRKWPR</sequence>
<gene>
    <name evidence="1" type="primary">cmk</name>
    <name type="ordered locus">GbCGDNIH1_2024</name>
</gene>
<proteinExistence type="inferred from homology"/>
<evidence type="ECO:0000255" key="1">
    <source>
        <dbReference type="HAMAP-Rule" id="MF_00238"/>
    </source>
</evidence>
<reference key="1">
    <citation type="journal article" date="2007" name="J. Bacteriol.">
        <title>Genome sequence analysis of the emerging human pathogenic acetic acid bacterium Granulibacter bethesdensis.</title>
        <authorList>
            <person name="Greenberg D.E."/>
            <person name="Porcella S.F."/>
            <person name="Zelazny A.M."/>
            <person name="Virtaneva K."/>
            <person name="Sturdevant D.E."/>
            <person name="Kupko J.J. III"/>
            <person name="Barbian K.D."/>
            <person name="Babar A."/>
            <person name="Dorward D.W."/>
            <person name="Holland S.M."/>
        </authorList>
    </citation>
    <scope>NUCLEOTIDE SEQUENCE [LARGE SCALE GENOMIC DNA]</scope>
    <source>
        <strain>ATCC BAA-1260 / CGDNIH1</strain>
    </source>
</reference>
<name>KCY_GRABC</name>
<protein>
    <recommendedName>
        <fullName evidence="1">Cytidylate kinase</fullName>
        <shortName evidence="1">CK</shortName>
        <ecNumber evidence="1">2.7.4.25</ecNumber>
    </recommendedName>
    <alternativeName>
        <fullName evidence="1">Cytidine monophosphate kinase</fullName>
        <shortName evidence="1">CMP kinase</shortName>
    </alternativeName>
</protein>
<keyword id="KW-0067">ATP-binding</keyword>
<keyword id="KW-0963">Cytoplasm</keyword>
<keyword id="KW-0418">Kinase</keyword>
<keyword id="KW-0547">Nucleotide-binding</keyword>
<keyword id="KW-1185">Reference proteome</keyword>
<keyword id="KW-0808">Transferase</keyword>
<dbReference type="EC" id="2.7.4.25" evidence="1"/>
<dbReference type="EMBL" id="CP000394">
    <property type="protein sequence ID" value="ABI62922.1"/>
    <property type="molecule type" value="Genomic_DNA"/>
</dbReference>
<dbReference type="RefSeq" id="WP_011632724.1">
    <property type="nucleotide sequence ID" value="NC_008343.2"/>
</dbReference>
<dbReference type="SMR" id="Q0BQI0"/>
<dbReference type="STRING" id="391165.GbCGDNIH1_2024"/>
<dbReference type="KEGG" id="gbe:GbCGDNIH1_2024"/>
<dbReference type="eggNOG" id="COG0283">
    <property type="taxonomic scope" value="Bacteria"/>
</dbReference>
<dbReference type="HOGENOM" id="CLU_079959_0_1_5"/>
<dbReference type="OrthoDB" id="9807434at2"/>
<dbReference type="Proteomes" id="UP000001963">
    <property type="component" value="Chromosome"/>
</dbReference>
<dbReference type="GO" id="GO:0005737">
    <property type="term" value="C:cytoplasm"/>
    <property type="evidence" value="ECO:0007669"/>
    <property type="project" value="UniProtKB-SubCell"/>
</dbReference>
<dbReference type="GO" id="GO:0005524">
    <property type="term" value="F:ATP binding"/>
    <property type="evidence" value="ECO:0007669"/>
    <property type="project" value="UniProtKB-UniRule"/>
</dbReference>
<dbReference type="GO" id="GO:0036430">
    <property type="term" value="F:CMP kinase activity"/>
    <property type="evidence" value="ECO:0007669"/>
    <property type="project" value="RHEA"/>
</dbReference>
<dbReference type="GO" id="GO:0036431">
    <property type="term" value="F:dCMP kinase activity"/>
    <property type="evidence" value="ECO:0007669"/>
    <property type="project" value="RHEA"/>
</dbReference>
<dbReference type="GO" id="GO:0006220">
    <property type="term" value="P:pyrimidine nucleotide metabolic process"/>
    <property type="evidence" value="ECO:0007669"/>
    <property type="project" value="UniProtKB-UniRule"/>
</dbReference>
<dbReference type="CDD" id="cd02020">
    <property type="entry name" value="CMPK"/>
    <property type="match status" value="1"/>
</dbReference>
<dbReference type="Gene3D" id="3.40.50.300">
    <property type="entry name" value="P-loop containing nucleotide triphosphate hydrolases"/>
    <property type="match status" value="1"/>
</dbReference>
<dbReference type="HAMAP" id="MF_00238">
    <property type="entry name" value="Cytidyl_kinase_type1"/>
    <property type="match status" value="1"/>
</dbReference>
<dbReference type="InterPro" id="IPR003136">
    <property type="entry name" value="Cytidylate_kin"/>
</dbReference>
<dbReference type="InterPro" id="IPR011994">
    <property type="entry name" value="Cytidylate_kinase_dom"/>
</dbReference>
<dbReference type="InterPro" id="IPR027417">
    <property type="entry name" value="P-loop_NTPase"/>
</dbReference>
<dbReference type="NCBIfam" id="TIGR00017">
    <property type="entry name" value="cmk"/>
    <property type="match status" value="1"/>
</dbReference>
<dbReference type="Pfam" id="PF02224">
    <property type="entry name" value="Cytidylate_kin"/>
    <property type="match status" value="1"/>
</dbReference>
<dbReference type="SUPFAM" id="SSF52540">
    <property type="entry name" value="P-loop containing nucleoside triphosphate hydrolases"/>
    <property type="match status" value="1"/>
</dbReference>